<name>JMT_ARATH</name>
<reference key="1">
    <citation type="journal article" date="2001" name="Proc. Natl. Acad. Sci. U.S.A.">
        <title>Jasmonic acid carboxyl methyltransferase: a key enzyme for jasmonate-regulated plant responses.</title>
        <authorList>
            <person name="Seo H.S."/>
            <person name="Song J.T."/>
            <person name="Cheong J.-J."/>
            <person name="Lee Y.-H."/>
            <person name="Lee Y.-W."/>
            <person name="Hwang I."/>
            <person name="Lee J.S."/>
            <person name="Choi Y.D."/>
        </authorList>
    </citation>
    <scope>NUCLEOTIDE SEQUENCE [GENOMIC DNA / MRNA]</scope>
    <scope>FUNCTION</scope>
    <scope>ENZYME ACTIVITY</scope>
    <scope>TISSUE SPECIFICITY</scope>
    <scope>BIOPHYSICOCHEMICAL PROPERTIES</scope>
    <scope>INDUCTION</scope>
    <scope>PATHWAY</scope>
</reference>
<reference key="2">
    <citation type="journal article" date="2000" name="Nature">
        <title>Sequence and analysis of chromosome 1 of the plant Arabidopsis thaliana.</title>
        <authorList>
            <person name="Theologis A."/>
            <person name="Ecker J.R."/>
            <person name="Palm C.J."/>
            <person name="Federspiel N.A."/>
            <person name="Kaul S."/>
            <person name="White O."/>
            <person name="Alonso J."/>
            <person name="Altafi H."/>
            <person name="Araujo R."/>
            <person name="Bowman C.L."/>
            <person name="Brooks S.Y."/>
            <person name="Buehler E."/>
            <person name="Chan A."/>
            <person name="Chao Q."/>
            <person name="Chen H."/>
            <person name="Cheuk R.F."/>
            <person name="Chin C.W."/>
            <person name="Chung M.K."/>
            <person name="Conn L."/>
            <person name="Conway A.B."/>
            <person name="Conway A.R."/>
            <person name="Creasy T.H."/>
            <person name="Dewar K."/>
            <person name="Dunn P."/>
            <person name="Etgu P."/>
            <person name="Feldblyum T.V."/>
            <person name="Feng J.-D."/>
            <person name="Fong B."/>
            <person name="Fujii C.Y."/>
            <person name="Gill J.E."/>
            <person name="Goldsmith A.D."/>
            <person name="Haas B."/>
            <person name="Hansen N.F."/>
            <person name="Hughes B."/>
            <person name="Huizar L."/>
            <person name="Hunter J.L."/>
            <person name="Jenkins J."/>
            <person name="Johnson-Hopson C."/>
            <person name="Khan S."/>
            <person name="Khaykin E."/>
            <person name="Kim C.J."/>
            <person name="Koo H.L."/>
            <person name="Kremenetskaia I."/>
            <person name="Kurtz D.B."/>
            <person name="Kwan A."/>
            <person name="Lam B."/>
            <person name="Langin-Hooper S."/>
            <person name="Lee A."/>
            <person name="Lee J.M."/>
            <person name="Lenz C.A."/>
            <person name="Li J.H."/>
            <person name="Li Y.-P."/>
            <person name="Lin X."/>
            <person name="Liu S.X."/>
            <person name="Liu Z.A."/>
            <person name="Luros J.S."/>
            <person name="Maiti R."/>
            <person name="Marziali A."/>
            <person name="Militscher J."/>
            <person name="Miranda M."/>
            <person name="Nguyen M."/>
            <person name="Nierman W.C."/>
            <person name="Osborne B.I."/>
            <person name="Pai G."/>
            <person name="Peterson J."/>
            <person name="Pham P.K."/>
            <person name="Rizzo M."/>
            <person name="Rooney T."/>
            <person name="Rowley D."/>
            <person name="Sakano H."/>
            <person name="Salzberg S.L."/>
            <person name="Schwartz J.R."/>
            <person name="Shinn P."/>
            <person name="Southwick A.M."/>
            <person name="Sun H."/>
            <person name="Tallon L.J."/>
            <person name="Tambunga G."/>
            <person name="Toriumi M.J."/>
            <person name="Town C.D."/>
            <person name="Utterback T."/>
            <person name="Van Aken S."/>
            <person name="Vaysberg M."/>
            <person name="Vysotskaia V.S."/>
            <person name="Walker M."/>
            <person name="Wu D."/>
            <person name="Yu G."/>
            <person name="Fraser C.M."/>
            <person name="Venter J.C."/>
            <person name="Davis R.W."/>
        </authorList>
    </citation>
    <scope>NUCLEOTIDE SEQUENCE [LARGE SCALE GENOMIC DNA]</scope>
    <source>
        <strain>cv. Columbia</strain>
    </source>
</reference>
<reference key="3">
    <citation type="journal article" date="2017" name="Plant J.">
        <title>Araport11: a complete reannotation of the Arabidopsis thaliana reference genome.</title>
        <authorList>
            <person name="Cheng C.Y."/>
            <person name="Krishnakumar V."/>
            <person name="Chan A.P."/>
            <person name="Thibaud-Nissen F."/>
            <person name="Schobel S."/>
            <person name="Town C.D."/>
        </authorList>
    </citation>
    <scope>GENOME REANNOTATION</scope>
    <source>
        <strain>cv. Columbia</strain>
    </source>
</reference>
<reference key="4">
    <citation type="submission" date="2006-07" db="EMBL/GenBank/DDBJ databases">
        <title>Large-scale analysis of RIKEN Arabidopsis full-length (RAFL) cDNAs.</title>
        <authorList>
            <person name="Totoki Y."/>
            <person name="Seki M."/>
            <person name="Ishida J."/>
            <person name="Nakajima M."/>
            <person name="Enju A."/>
            <person name="Kamiya A."/>
            <person name="Narusaka M."/>
            <person name="Shin-i T."/>
            <person name="Nakagawa M."/>
            <person name="Sakamoto N."/>
            <person name="Oishi K."/>
            <person name="Kohara Y."/>
            <person name="Kobayashi M."/>
            <person name="Toyoda A."/>
            <person name="Sakaki Y."/>
            <person name="Sakurai T."/>
            <person name="Iida K."/>
            <person name="Akiyama K."/>
            <person name="Satou M."/>
            <person name="Toyoda T."/>
            <person name="Konagaya A."/>
            <person name="Carninci P."/>
            <person name="Kawai J."/>
            <person name="Hayashizaki Y."/>
            <person name="Shinozaki K."/>
        </authorList>
    </citation>
    <scope>NUCLEOTIDE SEQUENCE [LARGE SCALE MRNA]</scope>
    <source>
        <strain>cv. Columbia</strain>
    </source>
</reference>
<organism>
    <name type="scientific">Arabidopsis thaliana</name>
    <name type="common">Mouse-ear cress</name>
    <dbReference type="NCBI Taxonomy" id="3702"/>
    <lineage>
        <taxon>Eukaryota</taxon>
        <taxon>Viridiplantae</taxon>
        <taxon>Streptophyta</taxon>
        <taxon>Embryophyta</taxon>
        <taxon>Tracheophyta</taxon>
        <taxon>Spermatophyta</taxon>
        <taxon>Magnoliopsida</taxon>
        <taxon>eudicotyledons</taxon>
        <taxon>Gunneridae</taxon>
        <taxon>Pentapetalae</taxon>
        <taxon>rosids</taxon>
        <taxon>malvids</taxon>
        <taxon>Brassicales</taxon>
        <taxon>Brassicaceae</taxon>
        <taxon>Camelineae</taxon>
        <taxon>Arabidopsis</taxon>
    </lineage>
</organism>
<comment type="function">
    <text evidence="7">Catalyzes the methylation of jasmonate into methyljasmonate, a plant volatile that acts as an important cellular regulator mediating diverse developmental processes and defense responses.</text>
</comment>
<comment type="catalytic activity">
    <reaction evidence="7">
        <text>jasmonate + S-adenosyl-L-methionine = methyl (-)-jasmonate + S-adenosyl-L-homocysteine</text>
        <dbReference type="Rhea" id="RHEA:13349"/>
        <dbReference type="ChEBI" id="CHEBI:15929"/>
        <dbReference type="ChEBI" id="CHEBI:57856"/>
        <dbReference type="ChEBI" id="CHEBI:58431"/>
        <dbReference type="ChEBI" id="CHEBI:59789"/>
        <dbReference type="EC" id="2.1.1.141"/>
    </reaction>
</comment>
<comment type="cofactor">
    <cofactor evidence="4">
        <name>Mg(2+)</name>
        <dbReference type="ChEBI" id="CHEBI:18420"/>
    </cofactor>
    <text evidence="4">Binds 1 Mg(2+) ion per subunit.</text>
</comment>
<comment type="biophysicochemical properties">
    <kinetics>
        <KM evidence="7">38.5 uM for methyl jasmonate</KM>
    </kinetics>
</comment>
<comment type="pathway">
    <text evidence="7">Lipid metabolism; oxylipin biosynthesis.</text>
</comment>
<comment type="subcellular location">
    <subcellularLocation>
        <location evidence="6">Cytoplasm</location>
    </subcellularLocation>
    <subcellularLocation>
        <location evidence="6">Nucleus</location>
    </subcellularLocation>
    <text evidence="6">Predominantly cytoplasmic (By similarity). Partially nuclear (By similarity).</text>
</comment>
<comment type="tissue specificity">
    <text evidence="7">Expressed in rosettes, cauline leaves and developing flowers but not in young seedlings.</text>
</comment>
<comment type="induction">
    <text evidence="7">By wounding and methyl jasmonate treatment.</text>
</comment>
<comment type="similarity">
    <text evidence="9">Belongs to the methyltransferase superfamily. Type-7 methyltransferase family.</text>
</comment>
<comment type="sequence caution" evidence="9">
    <conflict type="erroneous gene model prediction">
        <sequence resource="EMBL-CDS" id="AAF98406"/>
    </conflict>
</comment>
<feature type="chain" id="PRO_0000204464" description="Jasmonate O-methyltransferase">
    <location>
        <begin position="1"/>
        <end position="389"/>
    </location>
</feature>
<feature type="binding site" evidence="2">
    <location>
        <position position="18"/>
    </location>
    <ligand>
        <name>S-adenosyl-L-homocysteine</name>
        <dbReference type="ChEBI" id="CHEBI:57856"/>
    </ligand>
</feature>
<feature type="binding site" evidence="2">
    <location>
        <position position="25"/>
    </location>
    <ligand>
        <name>jasmonate</name>
        <dbReference type="ChEBI" id="CHEBI:58431"/>
    </ligand>
</feature>
<feature type="binding site" evidence="2">
    <location>
        <position position="60"/>
    </location>
    <ligand>
        <name>S-adenosyl-L-homocysteine</name>
        <dbReference type="ChEBI" id="CHEBI:57856"/>
    </ligand>
</feature>
<feature type="binding site" evidence="2">
    <location>
        <position position="65"/>
    </location>
    <ligand>
        <name>S-adenosyl-L-homocysteine</name>
        <dbReference type="ChEBI" id="CHEBI:57856"/>
    </ligand>
</feature>
<feature type="binding site" evidence="2">
    <location>
        <position position="97"/>
    </location>
    <ligand>
        <name>S-adenosyl-L-homocysteine</name>
        <dbReference type="ChEBI" id="CHEBI:57856"/>
    </ligand>
</feature>
<feature type="binding site" evidence="1">
    <location>
        <position position="98"/>
    </location>
    <ligand>
        <name>S-adenosyl-L-homocysteine</name>
        <dbReference type="ChEBI" id="CHEBI:57856"/>
    </ligand>
</feature>
<feature type="binding site" evidence="2">
    <location>
        <position position="142"/>
    </location>
    <ligand>
        <name>S-adenosyl-L-homocysteine</name>
        <dbReference type="ChEBI" id="CHEBI:57856"/>
    </ligand>
</feature>
<feature type="binding site" evidence="2">
    <location>
        <position position="143"/>
    </location>
    <ligand>
        <name>S-adenosyl-L-homocysteine</name>
        <dbReference type="ChEBI" id="CHEBI:57856"/>
    </ligand>
</feature>
<feature type="binding site" evidence="2">
    <location>
        <position position="163"/>
    </location>
    <ligand>
        <name>jasmonate</name>
        <dbReference type="ChEBI" id="CHEBI:58431"/>
    </ligand>
</feature>
<feature type="binding site" evidence="2">
    <location>
        <position position="164"/>
    </location>
    <ligand>
        <name>jasmonate</name>
        <dbReference type="ChEBI" id="CHEBI:58431"/>
    </ligand>
</feature>
<feature type="binding site" evidence="4">
    <location>
        <position position="186"/>
    </location>
    <ligand>
        <name>Mg(2+)</name>
        <dbReference type="ChEBI" id="CHEBI:18420"/>
    </ligand>
</feature>
<feature type="binding site" evidence="4">
    <location>
        <position position="272"/>
    </location>
    <ligand>
        <name>Mg(2+)</name>
        <dbReference type="ChEBI" id="CHEBI:18420"/>
    </ligand>
</feature>
<feature type="binding site" evidence="4">
    <location>
        <position position="274"/>
    </location>
    <ligand>
        <name>Mg(2+)</name>
        <dbReference type="ChEBI" id="CHEBI:18420"/>
    </ligand>
</feature>
<feature type="binding site" evidence="4">
    <location>
        <position position="275"/>
    </location>
    <ligand>
        <name>Mg(2+)</name>
        <dbReference type="ChEBI" id="CHEBI:18420"/>
    </ligand>
</feature>
<feature type="site" description="Involved in substrate discrimination" evidence="5">
    <location>
        <position position="157"/>
    </location>
</feature>
<feature type="site" description="Involved in substrate discrimination" evidence="3">
    <location>
        <position position="234"/>
    </location>
</feature>
<feature type="site" description="Involved in substrate discrimination" evidence="5">
    <location>
        <position position="353"/>
    </location>
</feature>
<feature type="sequence conflict" description="In Ref. 1; AAG23343/AAG23344." evidence="9" ref="1">
    <original>W</original>
    <variation>L</variation>
    <location>
        <position position="213"/>
    </location>
</feature>
<feature type="sequence conflict" description="In Ref. 1; AAG23343/AAG23344." evidence="9" ref="1">
    <original>V</original>
    <variation>A</variation>
    <location>
        <position position="321"/>
    </location>
</feature>
<feature type="sequence conflict" description="In Ref. 1; AAG23343/AAG23344." evidence="9" ref="1">
    <original>A</original>
    <variation>T</variation>
    <location>
        <position position="388"/>
    </location>
</feature>
<proteinExistence type="evidence at protein level"/>
<evidence type="ECO:0000250" key="1">
    <source>
        <dbReference type="UniProtKB" id="A0A6C0WW36"/>
    </source>
</evidence>
<evidence type="ECO:0000250" key="2">
    <source>
        <dbReference type="UniProtKB" id="B2KPR3"/>
    </source>
</evidence>
<evidence type="ECO:0000250" key="3">
    <source>
        <dbReference type="UniProtKB" id="Q2HXI6"/>
    </source>
</evidence>
<evidence type="ECO:0000250" key="4">
    <source>
        <dbReference type="UniProtKB" id="Q9FLN8"/>
    </source>
</evidence>
<evidence type="ECO:0000250" key="5">
    <source>
        <dbReference type="UniProtKB" id="Q9FZN8"/>
    </source>
</evidence>
<evidence type="ECO:0000250" key="6">
    <source>
        <dbReference type="UniProtKB" id="Q9SBK6"/>
    </source>
</evidence>
<evidence type="ECO:0000269" key="7">
    <source>
    </source>
</evidence>
<evidence type="ECO:0000303" key="8">
    <source>
    </source>
</evidence>
<evidence type="ECO:0000305" key="9"/>
<evidence type="ECO:0000312" key="10">
    <source>
        <dbReference type="Araport" id="AT1G19640"/>
    </source>
</evidence>
<evidence type="ECO:0000312" key="11">
    <source>
        <dbReference type="EMBL" id="AAF98406.1"/>
    </source>
</evidence>
<gene>
    <name evidence="8" type="primary">JMT</name>
    <name evidence="10" type="ordered locus">At1g19640</name>
    <name evidence="11" type="ORF">F14P1.3</name>
</gene>
<sequence>MEVMRVLHMNKGNGETSYAKNSTAQSNIISLGRRVMDEALKKLMMSNSEISSIGIADLGCSSGPNSLLSISNIVDTIHNLCPDLDRPVPELRVSLNDLPSNDFNYICASLPEFYDRVNNNKEGLGFGRGGGESCFVSAVPGSFYGRLFPRRSLHFVHSSSSLHWLSQVPCREAEKEDRTITADLENMGKIYISKTSPKSAHKAYALQFQTDFWVFLRSRSEELVPGGRMVLSFLGRRSLDPTTEESCYQWELLAQALMSMAKEGIIEEEKIDAFNAPYYAASSEELKMVIEKEGSFSIDRLEISPIDWEGGSISEESYDLVIRSKPEALASGRRVSNTIRAVVEPMLEPTFGENVMDELFERYAKIVGEYFYVSSPRYAIVILSLVRAG</sequence>
<keyword id="KW-0963">Cytoplasm</keyword>
<keyword id="KW-0275">Fatty acid biosynthesis</keyword>
<keyword id="KW-0276">Fatty acid metabolism</keyword>
<keyword id="KW-0444">Lipid biosynthesis</keyword>
<keyword id="KW-0443">Lipid metabolism</keyword>
<keyword id="KW-0460">Magnesium</keyword>
<keyword id="KW-0479">Metal-binding</keyword>
<keyword id="KW-0489">Methyltransferase</keyword>
<keyword id="KW-0539">Nucleus</keyword>
<keyword id="KW-0925">Oxylipin biosynthesis</keyword>
<keyword id="KW-1185">Reference proteome</keyword>
<keyword id="KW-0949">S-adenosyl-L-methionine</keyword>
<keyword id="KW-0808">Transferase</keyword>
<accession>Q9AR07</accession>
<accession>Q0WR43</accession>
<accession>Q9FWR8</accession>
<dbReference type="EC" id="2.1.1.141" evidence="7"/>
<dbReference type="EMBL" id="AY008434">
    <property type="protein sequence ID" value="AAG23343.1"/>
    <property type="molecule type" value="mRNA"/>
</dbReference>
<dbReference type="EMBL" id="AY008435">
    <property type="protein sequence ID" value="AAG23344.1"/>
    <property type="molecule type" value="Genomic_DNA"/>
</dbReference>
<dbReference type="EMBL" id="AC024609">
    <property type="protein sequence ID" value="AAF98406.1"/>
    <property type="status" value="ALT_SEQ"/>
    <property type="molecule type" value="Genomic_DNA"/>
</dbReference>
<dbReference type="EMBL" id="CP002684">
    <property type="protein sequence ID" value="AEE29876.1"/>
    <property type="molecule type" value="Genomic_DNA"/>
</dbReference>
<dbReference type="EMBL" id="AK228480">
    <property type="protein sequence ID" value="BAF00406.1"/>
    <property type="molecule type" value="mRNA"/>
</dbReference>
<dbReference type="PIR" id="B86329">
    <property type="entry name" value="B86329"/>
</dbReference>
<dbReference type="RefSeq" id="NP_173394.1">
    <property type="nucleotide sequence ID" value="NM_101820.4"/>
</dbReference>
<dbReference type="SMR" id="Q9AR07"/>
<dbReference type="FunCoup" id="Q9AR07">
    <property type="interactions" value="64"/>
</dbReference>
<dbReference type="STRING" id="3702.Q9AR07"/>
<dbReference type="SwissLipids" id="SLP:000001779"/>
<dbReference type="PaxDb" id="3702-AT1G19640.1"/>
<dbReference type="ProteomicsDB" id="238987"/>
<dbReference type="EnsemblPlants" id="AT1G19640.1">
    <property type="protein sequence ID" value="AT1G19640.1"/>
    <property type="gene ID" value="AT1G19640"/>
</dbReference>
<dbReference type="GeneID" id="838551"/>
<dbReference type="Gramene" id="AT1G19640.1">
    <property type="protein sequence ID" value="AT1G19640.1"/>
    <property type="gene ID" value="AT1G19640"/>
</dbReference>
<dbReference type="KEGG" id="ath:AT1G19640"/>
<dbReference type="Araport" id="AT1G19640"/>
<dbReference type="TAIR" id="AT1G19640">
    <property type="gene designation" value="JMT"/>
</dbReference>
<dbReference type="eggNOG" id="ENOG502QQYU">
    <property type="taxonomic scope" value="Eukaryota"/>
</dbReference>
<dbReference type="HOGENOM" id="CLU_019628_2_0_1"/>
<dbReference type="InParanoid" id="Q9AR07"/>
<dbReference type="OMA" id="HFGKDIM"/>
<dbReference type="BioCyc" id="ARA:AT1G19640-MONOMER"/>
<dbReference type="BRENDA" id="2.1.1.141">
    <property type="organism ID" value="399"/>
</dbReference>
<dbReference type="SABIO-RK" id="Q9AR07"/>
<dbReference type="UniPathway" id="UPA00382"/>
<dbReference type="PRO" id="PR:Q9AR07"/>
<dbReference type="Proteomes" id="UP000006548">
    <property type="component" value="Chromosome 1"/>
</dbReference>
<dbReference type="ExpressionAtlas" id="Q9AR07">
    <property type="expression patterns" value="baseline and differential"/>
</dbReference>
<dbReference type="GO" id="GO:0005737">
    <property type="term" value="C:cytoplasm"/>
    <property type="evidence" value="ECO:0000303"/>
    <property type="project" value="TAIR"/>
</dbReference>
<dbReference type="GO" id="GO:0005634">
    <property type="term" value="C:nucleus"/>
    <property type="evidence" value="ECO:0007669"/>
    <property type="project" value="UniProtKB-SubCell"/>
</dbReference>
<dbReference type="GO" id="GO:0046872">
    <property type="term" value="F:metal ion binding"/>
    <property type="evidence" value="ECO:0007669"/>
    <property type="project" value="UniProtKB-KW"/>
</dbReference>
<dbReference type="GO" id="GO:0030795">
    <property type="term" value="F:methyl jasmonate methylesterase activity"/>
    <property type="evidence" value="ECO:0000314"/>
    <property type="project" value="TAIR"/>
</dbReference>
<dbReference type="GO" id="GO:0006633">
    <property type="term" value="P:fatty acid biosynthetic process"/>
    <property type="evidence" value="ECO:0007669"/>
    <property type="project" value="UniProtKB-KW"/>
</dbReference>
<dbReference type="GO" id="GO:0009694">
    <property type="term" value="P:jasmonic acid metabolic process"/>
    <property type="evidence" value="ECO:0000314"/>
    <property type="project" value="TAIR"/>
</dbReference>
<dbReference type="GO" id="GO:0032259">
    <property type="term" value="P:methylation"/>
    <property type="evidence" value="ECO:0007669"/>
    <property type="project" value="UniProtKB-KW"/>
</dbReference>
<dbReference type="GO" id="GO:0031408">
    <property type="term" value="P:oxylipin biosynthetic process"/>
    <property type="evidence" value="ECO:0007669"/>
    <property type="project" value="UniProtKB-UniPathway"/>
</dbReference>
<dbReference type="GO" id="GO:0009611">
    <property type="term" value="P:response to wounding"/>
    <property type="evidence" value="ECO:0000270"/>
    <property type="project" value="TAIR"/>
</dbReference>
<dbReference type="Gene3D" id="1.10.1200.270">
    <property type="entry name" value="Methyltransferase, alpha-helical capping domain"/>
    <property type="match status" value="1"/>
</dbReference>
<dbReference type="Gene3D" id="3.40.50.150">
    <property type="entry name" value="Vaccinia Virus protein VP39"/>
    <property type="match status" value="1"/>
</dbReference>
<dbReference type="InterPro" id="IPR005299">
    <property type="entry name" value="MeTrfase_7"/>
</dbReference>
<dbReference type="InterPro" id="IPR042086">
    <property type="entry name" value="MeTrfase_capping"/>
</dbReference>
<dbReference type="InterPro" id="IPR029063">
    <property type="entry name" value="SAM-dependent_MTases_sf"/>
</dbReference>
<dbReference type="PANTHER" id="PTHR31009">
    <property type="entry name" value="S-ADENOSYL-L-METHIONINE:CARBOXYL METHYLTRANSFERASE FAMILY PROTEIN"/>
    <property type="match status" value="1"/>
</dbReference>
<dbReference type="Pfam" id="PF03492">
    <property type="entry name" value="Methyltransf_7"/>
    <property type="match status" value="1"/>
</dbReference>
<dbReference type="SUPFAM" id="SSF53335">
    <property type="entry name" value="S-adenosyl-L-methionine-dependent methyltransferases"/>
    <property type="match status" value="1"/>
</dbReference>
<protein>
    <recommendedName>
        <fullName evidence="8">Jasmonate O-methyltransferase</fullName>
        <ecNumber evidence="7">2.1.1.141</ecNumber>
    </recommendedName>
    <alternativeName>
        <fullName evidence="8">S-adenosyl-L-methionine:jasmonic acid carboxyl methyltransferase</fullName>
    </alternativeName>
</protein>